<proteinExistence type="evidence at transcript level"/>
<organism>
    <name type="scientific">Bos taurus</name>
    <name type="common">Bovine</name>
    <dbReference type="NCBI Taxonomy" id="9913"/>
    <lineage>
        <taxon>Eukaryota</taxon>
        <taxon>Metazoa</taxon>
        <taxon>Chordata</taxon>
        <taxon>Craniata</taxon>
        <taxon>Vertebrata</taxon>
        <taxon>Euteleostomi</taxon>
        <taxon>Mammalia</taxon>
        <taxon>Eutheria</taxon>
        <taxon>Laurasiatheria</taxon>
        <taxon>Artiodactyla</taxon>
        <taxon>Ruminantia</taxon>
        <taxon>Pecora</taxon>
        <taxon>Bovidae</taxon>
        <taxon>Bovinae</taxon>
        <taxon>Bos</taxon>
    </lineage>
</organism>
<reference key="1">
    <citation type="submission" date="2007-07" db="EMBL/GenBank/DDBJ databases">
        <authorList>
            <consortium name="NIH - Mammalian Gene Collection (MGC) project"/>
        </authorList>
    </citation>
    <scope>NUCLEOTIDE SEQUENCE [LARGE SCALE MRNA]</scope>
    <source>
        <strain>Hereford</strain>
        <tissue>Kidney</tissue>
    </source>
</reference>
<keyword id="KW-1185">Reference proteome</keyword>
<sequence>MTSIKEQAAISRLLSFLQDWDNAGKVARSNILNNFIEANQGKTAPELEQEFSQGASLFLVRLTTWLRLTYMTGSPLDKLLRSIGVFLSAVSSNRYLIEFLEVGGVLTLLEILALNKIKEEDKKESIKLLQVIANSGRKYKELICESYGVRSIAEFLAKSKSEETQEEVQVLLDSLIHGNPKYQNQVYKGLIALLPCASPKAQQLALQTLRTAQSIIGTTHPSIVDCVLKVLCTMHLEVQYEAIELIKDLVNYDVCPALLKGLVALLIPSFKETSKLQSQIVSDSSVLELTAHLPLFLQQAAAAKAIGVLARHNTTLAEEMLHLRVIHSLMAAMGNTDHSNSQRQASLTLEYFVQLFPVVEEHVRKTMGEELYKLFLSNAENLYMNIDSIQADILAANKVNVTRVLHLSGLSYSNMSFYFGHPNEDQVAYVTHFRKEDVEEKE</sequence>
<evidence type="ECO:0000250" key="1">
    <source>
        <dbReference type="UniProtKB" id="Q6PIY5"/>
    </source>
</evidence>
<feature type="chain" id="PRO_0000320610" description="Armadillo-like helical domain containing protein 1">
    <location>
        <begin position="1"/>
        <end position="442"/>
    </location>
</feature>
<protein>
    <recommendedName>
        <fullName evidence="1">Armadillo-like helical domain containing protein 1</fullName>
    </recommendedName>
</protein>
<gene>
    <name evidence="1" type="primary">ARMH1</name>
</gene>
<dbReference type="EMBL" id="BC151536">
    <property type="protein sequence ID" value="AAI51537.1"/>
    <property type="molecule type" value="mRNA"/>
</dbReference>
<dbReference type="RefSeq" id="NP_001095754.1">
    <property type="nucleotide sequence ID" value="NM_001102284.2"/>
</dbReference>
<dbReference type="RefSeq" id="XP_005204910.1">
    <property type="nucleotide sequence ID" value="XM_005204853.5"/>
</dbReference>
<dbReference type="RefSeq" id="XP_005204911.1">
    <property type="nucleotide sequence ID" value="XM_005204854.4"/>
</dbReference>
<dbReference type="RefSeq" id="XP_005204913.1">
    <property type="nucleotide sequence ID" value="XM_005204856.4"/>
</dbReference>
<dbReference type="RefSeq" id="XP_059740843.1">
    <property type="nucleotide sequence ID" value="XM_059884860.1"/>
</dbReference>
<dbReference type="RefSeq" id="XP_059740844.1">
    <property type="nucleotide sequence ID" value="XM_059884861.1"/>
</dbReference>
<dbReference type="FunCoup" id="A7MBF6">
    <property type="interactions" value="100"/>
</dbReference>
<dbReference type="PaxDb" id="9913-ENSBTAP00000040637"/>
<dbReference type="PeptideAtlas" id="A7MBF6"/>
<dbReference type="Ensembl" id="ENSBTAT00000043041.4">
    <property type="protein sequence ID" value="ENSBTAP00000040637.2"/>
    <property type="gene ID" value="ENSBTAG00000011822.6"/>
</dbReference>
<dbReference type="GeneID" id="614845"/>
<dbReference type="KEGG" id="bta:614845"/>
<dbReference type="CTD" id="339541"/>
<dbReference type="VEuPathDB" id="HostDB:ENSBTAG00000011822"/>
<dbReference type="VGNC" id="VGNC:52605">
    <property type="gene designation" value="ARMH1"/>
</dbReference>
<dbReference type="eggNOG" id="ENOG502QQAX">
    <property type="taxonomic scope" value="Eukaryota"/>
</dbReference>
<dbReference type="GeneTree" id="ENSGT00390000001593"/>
<dbReference type="HOGENOM" id="CLU_057628_1_0_1"/>
<dbReference type="InParanoid" id="A7MBF6"/>
<dbReference type="OMA" id="ETICECY"/>
<dbReference type="OrthoDB" id="278163at2759"/>
<dbReference type="TreeFam" id="TF329061"/>
<dbReference type="Proteomes" id="UP000009136">
    <property type="component" value="Chromosome 3"/>
</dbReference>
<dbReference type="Bgee" id="ENSBTAG00000011822">
    <property type="expression patterns" value="Expressed in cortex of kidney and 59 other cell types or tissues"/>
</dbReference>
<dbReference type="Gene3D" id="1.25.10.10">
    <property type="entry name" value="Leucine-rich Repeat Variant"/>
    <property type="match status" value="1"/>
</dbReference>
<dbReference type="InterPro" id="IPR011989">
    <property type="entry name" value="ARM-like"/>
</dbReference>
<dbReference type="InterPro" id="IPR016024">
    <property type="entry name" value="ARM-type_fold"/>
</dbReference>
<dbReference type="InterPro" id="IPR041090">
    <property type="entry name" value="DUF5578"/>
</dbReference>
<dbReference type="PANTHER" id="PTHR34258">
    <property type="entry name" value="ARMADILLO-LIKE HELICAL DOMAIN CONTAINING PROTEIN 1"/>
    <property type="match status" value="1"/>
</dbReference>
<dbReference type="PANTHER" id="PTHR34258:SF1">
    <property type="entry name" value="ARMADILLO-LIKE HELICAL DOMAIN CONTAINING PROTEIN 1"/>
    <property type="match status" value="1"/>
</dbReference>
<dbReference type="Pfam" id="PF17741">
    <property type="entry name" value="DUF5578"/>
    <property type="match status" value="1"/>
</dbReference>
<dbReference type="SUPFAM" id="SSF48371">
    <property type="entry name" value="ARM repeat"/>
    <property type="match status" value="1"/>
</dbReference>
<accession>A7MBF6</accession>
<name>ARMD1_BOVIN</name>